<sequence length="514" mass="56144">MSSKKPVVLVIRDGWGRNPLGPDVAKEYGDATVLADTPFTDYLLANYPHSLLGASGEDVGLPDGQMGNSEVGHLNLGAGRVVFQDLCRVDNAIKDGSMGENAVLKTAFSQAASSRLHLLGLVSDGGVHSHINHLIGIVKYAYEAGVRDICIHAITDGRDCSPTSGVGFIRQLEEAVRPYGAKIATVVGRFYAMDRDKRWDRNKLAWDAIVLGRGEQCSCSPAEYVEQCYAKGETDEFLKPGIFAYGNEQRVRDNDVVFFFNFRADRARQMSDAFLYPEFDGFDREVTPKVHYVTLTEYDAKYPSPIVFEQEQLNNIFGQIVSEAGKTQLRIAETEKYAHVTFFFNGGVETQFPGEDRILVPSPREVATYDLKPQMSAAEVADKFVDAVNKYDVVIMNFANGDMVGHTGFVEAGIAACEAVDSALEKCVKKVLELGGKLLITADHGNAEHMRNEDGSPNTAHTTNLVDLIYVADDKDQVTLSDGILADVAPTLLSLMGLKQPAEMSGHSLVTPGK</sequence>
<comment type="function">
    <text evidence="1">Catalyzes the interconversion of 2-phosphoglycerate and 3-phosphoglycerate.</text>
</comment>
<comment type="catalytic activity">
    <reaction evidence="1">
        <text>(2R)-2-phosphoglycerate = (2R)-3-phosphoglycerate</text>
        <dbReference type="Rhea" id="RHEA:15901"/>
        <dbReference type="ChEBI" id="CHEBI:58272"/>
        <dbReference type="ChEBI" id="CHEBI:58289"/>
        <dbReference type="EC" id="5.4.2.12"/>
    </reaction>
</comment>
<comment type="cofactor">
    <cofactor evidence="1">
        <name>Mn(2+)</name>
        <dbReference type="ChEBI" id="CHEBI:29035"/>
    </cofactor>
    <text evidence="1">Binds 2 manganese ions per subunit.</text>
</comment>
<comment type="pathway">
    <text evidence="1">Carbohydrate degradation; glycolysis; pyruvate from D-glyceraldehyde 3-phosphate: step 3/5.</text>
</comment>
<comment type="subunit">
    <text evidence="1">Monomer.</text>
</comment>
<comment type="similarity">
    <text evidence="1">Belongs to the BPG-independent phosphoglycerate mutase family.</text>
</comment>
<protein>
    <recommendedName>
        <fullName evidence="1">2,3-bisphosphoglycerate-independent phosphoglycerate mutase</fullName>
        <shortName evidence="1">BPG-independent PGAM</shortName>
        <shortName evidence="1">Phosphoglyceromutase</shortName>
        <shortName evidence="1">iPGM</shortName>
        <ecNumber evidence="1">5.4.2.12</ecNumber>
    </recommendedName>
</protein>
<keyword id="KW-0324">Glycolysis</keyword>
<keyword id="KW-0413">Isomerase</keyword>
<keyword id="KW-0464">Manganese</keyword>
<keyword id="KW-0479">Metal-binding</keyword>
<keyword id="KW-1185">Reference proteome</keyword>
<evidence type="ECO:0000255" key="1">
    <source>
        <dbReference type="HAMAP-Rule" id="MF_01038"/>
    </source>
</evidence>
<accession>B2UMU5</accession>
<organism>
    <name type="scientific">Akkermansia muciniphila (strain ATCC BAA-835 / DSM 22959 / JCM 33894 / BCRC 81048 / CCUG 64013 / CIP 107961 / Muc)</name>
    <dbReference type="NCBI Taxonomy" id="349741"/>
    <lineage>
        <taxon>Bacteria</taxon>
        <taxon>Pseudomonadati</taxon>
        <taxon>Verrucomicrobiota</taxon>
        <taxon>Verrucomicrobiia</taxon>
        <taxon>Verrucomicrobiales</taxon>
        <taxon>Akkermansiaceae</taxon>
        <taxon>Akkermansia</taxon>
    </lineage>
</organism>
<reference key="1">
    <citation type="journal article" date="2011" name="PLoS ONE">
        <title>The genome of Akkermansia muciniphila, a dedicated intestinal mucin degrader, and its use in exploring intestinal metagenomes.</title>
        <authorList>
            <person name="van Passel M.W."/>
            <person name="Kant R."/>
            <person name="Zoetendal E.G."/>
            <person name="Plugge C.M."/>
            <person name="Derrien M."/>
            <person name="Malfatti S.A."/>
            <person name="Chain P.S."/>
            <person name="Woyke T."/>
            <person name="Palva A."/>
            <person name="de Vos W.M."/>
            <person name="Smidt H."/>
        </authorList>
    </citation>
    <scope>NUCLEOTIDE SEQUENCE [LARGE SCALE GENOMIC DNA]</scope>
    <source>
        <strain>ATCC BAA-835 / DSM 22959 / JCM 33894 / BCRC 81048 / CCUG 64013 / CIP 107961 / Muc</strain>
    </source>
</reference>
<dbReference type="EC" id="5.4.2.12" evidence="1"/>
<dbReference type="EMBL" id="CP001071">
    <property type="protein sequence ID" value="ACD04151.1"/>
    <property type="molecule type" value="Genomic_DNA"/>
</dbReference>
<dbReference type="RefSeq" id="WP_012419366.1">
    <property type="nucleotide sequence ID" value="NC_010655.1"/>
</dbReference>
<dbReference type="SMR" id="B2UMU5"/>
<dbReference type="STRING" id="349741.Amuc_0309"/>
<dbReference type="PaxDb" id="349741-Amuc_0309"/>
<dbReference type="KEGG" id="amu:Amuc_0309"/>
<dbReference type="eggNOG" id="COG0696">
    <property type="taxonomic scope" value="Bacteria"/>
</dbReference>
<dbReference type="HOGENOM" id="CLU_026099_2_0_0"/>
<dbReference type="OrthoDB" id="9800863at2"/>
<dbReference type="BioCyc" id="AMUC349741:G1GBX-351-MONOMER"/>
<dbReference type="UniPathway" id="UPA00109">
    <property type="reaction ID" value="UER00186"/>
</dbReference>
<dbReference type="Proteomes" id="UP000001031">
    <property type="component" value="Chromosome"/>
</dbReference>
<dbReference type="GO" id="GO:0005829">
    <property type="term" value="C:cytosol"/>
    <property type="evidence" value="ECO:0007669"/>
    <property type="project" value="TreeGrafter"/>
</dbReference>
<dbReference type="GO" id="GO:0030145">
    <property type="term" value="F:manganese ion binding"/>
    <property type="evidence" value="ECO:0007669"/>
    <property type="project" value="UniProtKB-UniRule"/>
</dbReference>
<dbReference type="GO" id="GO:0004619">
    <property type="term" value="F:phosphoglycerate mutase activity"/>
    <property type="evidence" value="ECO:0007669"/>
    <property type="project" value="UniProtKB-EC"/>
</dbReference>
<dbReference type="GO" id="GO:0006007">
    <property type="term" value="P:glucose catabolic process"/>
    <property type="evidence" value="ECO:0007669"/>
    <property type="project" value="InterPro"/>
</dbReference>
<dbReference type="GO" id="GO:0006096">
    <property type="term" value="P:glycolytic process"/>
    <property type="evidence" value="ECO:0007669"/>
    <property type="project" value="UniProtKB-UniRule"/>
</dbReference>
<dbReference type="CDD" id="cd16010">
    <property type="entry name" value="iPGM"/>
    <property type="match status" value="1"/>
</dbReference>
<dbReference type="FunFam" id="3.40.1450.10:FF:000002">
    <property type="entry name" value="2,3-bisphosphoglycerate-independent phosphoglycerate mutase"/>
    <property type="match status" value="1"/>
</dbReference>
<dbReference type="Gene3D" id="3.40.720.10">
    <property type="entry name" value="Alkaline Phosphatase, subunit A"/>
    <property type="match status" value="1"/>
</dbReference>
<dbReference type="Gene3D" id="3.40.1450.10">
    <property type="entry name" value="BPG-independent phosphoglycerate mutase, domain B"/>
    <property type="match status" value="1"/>
</dbReference>
<dbReference type="HAMAP" id="MF_01038">
    <property type="entry name" value="GpmI"/>
    <property type="match status" value="1"/>
</dbReference>
<dbReference type="InterPro" id="IPR017850">
    <property type="entry name" value="Alkaline_phosphatase_core_sf"/>
</dbReference>
<dbReference type="InterPro" id="IPR011258">
    <property type="entry name" value="BPG-indep_PGM_N"/>
</dbReference>
<dbReference type="InterPro" id="IPR006124">
    <property type="entry name" value="Metalloenzyme"/>
</dbReference>
<dbReference type="InterPro" id="IPR036646">
    <property type="entry name" value="PGAM_B_sf"/>
</dbReference>
<dbReference type="InterPro" id="IPR005995">
    <property type="entry name" value="Pgm_bpd_ind"/>
</dbReference>
<dbReference type="NCBIfam" id="TIGR01307">
    <property type="entry name" value="pgm_bpd_ind"/>
    <property type="match status" value="1"/>
</dbReference>
<dbReference type="PANTHER" id="PTHR31637">
    <property type="entry name" value="2,3-BISPHOSPHOGLYCERATE-INDEPENDENT PHOSPHOGLYCERATE MUTASE"/>
    <property type="match status" value="1"/>
</dbReference>
<dbReference type="PANTHER" id="PTHR31637:SF0">
    <property type="entry name" value="2,3-BISPHOSPHOGLYCERATE-INDEPENDENT PHOSPHOGLYCERATE MUTASE"/>
    <property type="match status" value="1"/>
</dbReference>
<dbReference type="Pfam" id="PF06415">
    <property type="entry name" value="iPGM_N"/>
    <property type="match status" value="1"/>
</dbReference>
<dbReference type="Pfam" id="PF01676">
    <property type="entry name" value="Metalloenzyme"/>
    <property type="match status" value="1"/>
</dbReference>
<dbReference type="PIRSF" id="PIRSF001492">
    <property type="entry name" value="IPGAM"/>
    <property type="match status" value="1"/>
</dbReference>
<dbReference type="SUPFAM" id="SSF64158">
    <property type="entry name" value="2,3-Bisphosphoglycerate-independent phosphoglycerate mutase, substrate-binding domain"/>
    <property type="match status" value="1"/>
</dbReference>
<dbReference type="SUPFAM" id="SSF53649">
    <property type="entry name" value="Alkaline phosphatase-like"/>
    <property type="match status" value="1"/>
</dbReference>
<name>GPMI_AKKM8</name>
<gene>
    <name evidence="1" type="primary">gpmI</name>
    <name type="ordered locus">Amuc_0309</name>
</gene>
<feature type="chain" id="PRO_1000135894" description="2,3-bisphosphoglycerate-independent phosphoglycerate mutase">
    <location>
        <begin position="1"/>
        <end position="514"/>
    </location>
</feature>
<feature type="active site" description="Phosphoserine intermediate" evidence="1">
    <location>
        <position position="69"/>
    </location>
</feature>
<feature type="binding site" evidence="1">
    <location>
        <position position="13"/>
    </location>
    <ligand>
        <name>Mn(2+)</name>
        <dbReference type="ChEBI" id="CHEBI:29035"/>
        <label>2</label>
    </ligand>
</feature>
<feature type="binding site" evidence="1">
    <location>
        <position position="69"/>
    </location>
    <ligand>
        <name>Mn(2+)</name>
        <dbReference type="ChEBI" id="CHEBI:29035"/>
        <label>2</label>
    </ligand>
</feature>
<feature type="binding site" evidence="1">
    <location>
        <position position="128"/>
    </location>
    <ligand>
        <name>substrate</name>
    </ligand>
</feature>
<feature type="binding site" evidence="1">
    <location>
        <begin position="158"/>
        <end position="159"/>
    </location>
    <ligand>
        <name>substrate</name>
    </ligand>
</feature>
<feature type="binding site" evidence="1">
    <location>
        <position position="189"/>
    </location>
    <ligand>
        <name>substrate</name>
    </ligand>
</feature>
<feature type="binding site" evidence="1">
    <location>
        <position position="195"/>
    </location>
    <ligand>
        <name>substrate</name>
    </ligand>
</feature>
<feature type="binding site" evidence="1">
    <location>
        <begin position="263"/>
        <end position="266"/>
    </location>
    <ligand>
        <name>substrate</name>
    </ligand>
</feature>
<feature type="binding site" evidence="1">
    <location>
        <position position="336"/>
    </location>
    <ligand>
        <name>substrate</name>
    </ligand>
</feature>
<feature type="binding site" evidence="1">
    <location>
        <position position="402"/>
    </location>
    <ligand>
        <name>Mn(2+)</name>
        <dbReference type="ChEBI" id="CHEBI:29035"/>
        <label>1</label>
    </ligand>
</feature>
<feature type="binding site" evidence="1">
    <location>
        <position position="406"/>
    </location>
    <ligand>
        <name>Mn(2+)</name>
        <dbReference type="ChEBI" id="CHEBI:29035"/>
        <label>1</label>
    </ligand>
</feature>
<feature type="binding site" evidence="1">
    <location>
        <position position="443"/>
    </location>
    <ligand>
        <name>Mn(2+)</name>
        <dbReference type="ChEBI" id="CHEBI:29035"/>
        <label>2</label>
    </ligand>
</feature>
<feature type="binding site" evidence="1">
    <location>
        <position position="444"/>
    </location>
    <ligand>
        <name>Mn(2+)</name>
        <dbReference type="ChEBI" id="CHEBI:29035"/>
        <label>2</label>
    </ligand>
</feature>
<feature type="binding site" evidence="1">
    <location>
        <position position="461"/>
    </location>
    <ligand>
        <name>Mn(2+)</name>
        <dbReference type="ChEBI" id="CHEBI:29035"/>
        <label>1</label>
    </ligand>
</feature>
<proteinExistence type="inferred from homology"/>